<name>IF2_FRAAA</name>
<dbReference type="EMBL" id="CT573213">
    <property type="protein sequence ID" value="CAJ64392.1"/>
    <property type="molecule type" value="Genomic_DNA"/>
</dbReference>
<dbReference type="RefSeq" id="WP_011606833.1">
    <property type="nucleotide sequence ID" value="NC_008278.1"/>
</dbReference>
<dbReference type="SMR" id="Q0RDS4"/>
<dbReference type="STRING" id="326424.FRAAL5760"/>
<dbReference type="KEGG" id="fal:FRAAL5760"/>
<dbReference type="eggNOG" id="COG0532">
    <property type="taxonomic scope" value="Bacteria"/>
</dbReference>
<dbReference type="HOGENOM" id="CLU_006301_9_4_11"/>
<dbReference type="OrthoDB" id="9811804at2"/>
<dbReference type="Proteomes" id="UP000000657">
    <property type="component" value="Chromosome"/>
</dbReference>
<dbReference type="GO" id="GO:0005829">
    <property type="term" value="C:cytosol"/>
    <property type="evidence" value="ECO:0007669"/>
    <property type="project" value="TreeGrafter"/>
</dbReference>
<dbReference type="GO" id="GO:0005525">
    <property type="term" value="F:GTP binding"/>
    <property type="evidence" value="ECO:0007669"/>
    <property type="project" value="UniProtKB-KW"/>
</dbReference>
<dbReference type="GO" id="GO:0003924">
    <property type="term" value="F:GTPase activity"/>
    <property type="evidence" value="ECO:0007669"/>
    <property type="project" value="UniProtKB-UniRule"/>
</dbReference>
<dbReference type="GO" id="GO:0003743">
    <property type="term" value="F:translation initiation factor activity"/>
    <property type="evidence" value="ECO:0007669"/>
    <property type="project" value="UniProtKB-UniRule"/>
</dbReference>
<dbReference type="CDD" id="cd01887">
    <property type="entry name" value="IF2_eIF5B"/>
    <property type="match status" value="1"/>
</dbReference>
<dbReference type="CDD" id="cd03702">
    <property type="entry name" value="IF2_mtIF2_II"/>
    <property type="match status" value="1"/>
</dbReference>
<dbReference type="CDD" id="cd03692">
    <property type="entry name" value="mtIF2_IVc"/>
    <property type="match status" value="1"/>
</dbReference>
<dbReference type="FunFam" id="1.10.10.2480:FF:000003">
    <property type="entry name" value="Translation initiation factor IF-2"/>
    <property type="match status" value="1"/>
</dbReference>
<dbReference type="FunFam" id="2.40.30.10:FF:000007">
    <property type="entry name" value="Translation initiation factor IF-2"/>
    <property type="match status" value="1"/>
</dbReference>
<dbReference type="FunFam" id="2.40.30.10:FF:000008">
    <property type="entry name" value="Translation initiation factor IF-2"/>
    <property type="match status" value="1"/>
</dbReference>
<dbReference type="FunFam" id="3.40.50.10050:FF:000001">
    <property type="entry name" value="Translation initiation factor IF-2"/>
    <property type="match status" value="1"/>
</dbReference>
<dbReference type="FunFam" id="3.40.50.300:FF:000019">
    <property type="entry name" value="Translation initiation factor IF-2"/>
    <property type="match status" value="1"/>
</dbReference>
<dbReference type="Gene3D" id="1.10.10.2480">
    <property type="match status" value="1"/>
</dbReference>
<dbReference type="Gene3D" id="3.40.50.300">
    <property type="entry name" value="P-loop containing nucleotide triphosphate hydrolases"/>
    <property type="match status" value="1"/>
</dbReference>
<dbReference type="Gene3D" id="2.40.30.10">
    <property type="entry name" value="Translation factors"/>
    <property type="match status" value="2"/>
</dbReference>
<dbReference type="Gene3D" id="3.40.50.10050">
    <property type="entry name" value="Translation initiation factor IF- 2, domain 3"/>
    <property type="match status" value="1"/>
</dbReference>
<dbReference type="HAMAP" id="MF_00100_B">
    <property type="entry name" value="IF_2_B"/>
    <property type="match status" value="1"/>
</dbReference>
<dbReference type="InterPro" id="IPR053905">
    <property type="entry name" value="EF-G-like_DII"/>
</dbReference>
<dbReference type="InterPro" id="IPR044145">
    <property type="entry name" value="IF2_II"/>
</dbReference>
<dbReference type="InterPro" id="IPR006847">
    <property type="entry name" value="IF2_N"/>
</dbReference>
<dbReference type="InterPro" id="IPR027417">
    <property type="entry name" value="P-loop_NTPase"/>
</dbReference>
<dbReference type="InterPro" id="IPR005225">
    <property type="entry name" value="Small_GTP-bd"/>
</dbReference>
<dbReference type="InterPro" id="IPR000795">
    <property type="entry name" value="T_Tr_GTP-bd_dom"/>
</dbReference>
<dbReference type="InterPro" id="IPR000178">
    <property type="entry name" value="TF_IF2_bacterial-like"/>
</dbReference>
<dbReference type="InterPro" id="IPR015760">
    <property type="entry name" value="TIF_IF2"/>
</dbReference>
<dbReference type="InterPro" id="IPR023115">
    <property type="entry name" value="TIF_IF2_dom3"/>
</dbReference>
<dbReference type="InterPro" id="IPR036925">
    <property type="entry name" value="TIF_IF2_dom3_sf"/>
</dbReference>
<dbReference type="InterPro" id="IPR009000">
    <property type="entry name" value="Transl_B-barrel_sf"/>
</dbReference>
<dbReference type="NCBIfam" id="TIGR00487">
    <property type="entry name" value="IF-2"/>
    <property type="match status" value="1"/>
</dbReference>
<dbReference type="NCBIfam" id="TIGR00231">
    <property type="entry name" value="small_GTP"/>
    <property type="match status" value="1"/>
</dbReference>
<dbReference type="PANTHER" id="PTHR43381:SF5">
    <property type="entry name" value="TR-TYPE G DOMAIN-CONTAINING PROTEIN"/>
    <property type="match status" value="1"/>
</dbReference>
<dbReference type="PANTHER" id="PTHR43381">
    <property type="entry name" value="TRANSLATION INITIATION FACTOR IF-2-RELATED"/>
    <property type="match status" value="1"/>
</dbReference>
<dbReference type="Pfam" id="PF22042">
    <property type="entry name" value="EF-G_D2"/>
    <property type="match status" value="1"/>
</dbReference>
<dbReference type="Pfam" id="PF00009">
    <property type="entry name" value="GTP_EFTU"/>
    <property type="match status" value="1"/>
</dbReference>
<dbReference type="Pfam" id="PF11987">
    <property type="entry name" value="IF-2"/>
    <property type="match status" value="1"/>
</dbReference>
<dbReference type="Pfam" id="PF04760">
    <property type="entry name" value="IF2_N"/>
    <property type="match status" value="1"/>
</dbReference>
<dbReference type="PRINTS" id="PR00315">
    <property type="entry name" value="ELONGATNFCT"/>
</dbReference>
<dbReference type="SUPFAM" id="SSF52156">
    <property type="entry name" value="Initiation factor IF2/eIF5b, domain 3"/>
    <property type="match status" value="1"/>
</dbReference>
<dbReference type="SUPFAM" id="SSF52540">
    <property type="entry name" value="P-loop containing nucleoside triphosphate hydrolases"/>
    <property type="match status" value="1"/>
</dbReference>
<dbReference type="SUPFAM" id="SSF50447">
    <property type="entry name" value="Translation proteins"/>
    <property type="match status" value="2"/>
</dbReference>
<dbReference type="PROSITE" id="PS51722">
    <property type="entry name" value="G_TR_2"/>
    <property type="match status" value="1"/>
</dbReference>
<dbReference type="PROSITE" id="PS01176">
    <property type="entry name" value="IF2"/>
    <property type="match status" value="1"/>
</dbReference>
<reference key="1">
    <citation type="journal article" date="2007" name="Genome Res.">
        <title>Genome characteristics of facultatively symbiotic Frankia sp. strains reflect host range and host plant biogeography.</title>
        <authorList>
            <person name="Normand P."/>
            <person name="Lapierre P."/>
            <person name="Tisa L.S."/>
            <person name="Gogarten J.P."/>
            <person name="Alloisio N."/>
            <person name="Bagnarol E."/>
            <person name="Bassi C.A."/>
            <person name="Berry A.M."/>
            <person name="Bickhart D.M."/>
            <person name="Choisne N."/>
            <person name="Couloux A."/>
            <person name="Cournoyer B."/>
            <person name="Cruveiller S."/>
            <person name="Daubin V."/>
            <person name="Demange N."/>
            <person name="Francino M.P."/>
            <person name="Goltsman E."/>
            <person name="Huang Y."/>
            <person name="Kopp O.R."/>
            <person name="Labarre L."/>
            <person name="Lapidus A."/>
            <person name="Lavire C."/>
            <person name="Marechal J."/>
            <person name="Martinez M."/>
            <person name="Mastronunzio J.E."/>
            <person name="Mullin B.C."/>
            <person name="Niemann J."/>
            <person name="Pujic P."/>
            <person name="Rawnsley T."/>
            <person name="Rouy Z."/>
            <person name="Schenowitz C."/>
            <person name="Sellstedt A."/>
            <person name="Tavares F."/>
            <person name="Tomkins J.P."/>
            <person name="Vallenet D."/>
            <person name="Valverde C."/>
            <person name="Wall L.G."/>
            <person name="Wang Y."/>
            <person name="Medigue C."/>
            <person name="Benson D.R."/>
        </authorList>
    </citation>
    <scope>NUCLEOTIDE SEQUENCE [LARGE SCALE GENOMIC DNA]</scope>
    <source>
        <strain>DSM 45986 / CECT 9034 / ACN14a</strain>
    </source>
</reference>
<keyword id="KW-0963">Cytoplasm</keyword>
<keyword id="KW-0342">GTP-binding</keyword>
<keyword id="KW-0396">Initiation factor</keyword>
<keyword id="KW-0547">Nucleotide-binding</keyword>
<keyword id="KW-0648">Protein biosynthesis</keyword>
<keyword id="KW-1185">Reference proteome</keyword>
<gene>
    <name evidence="2" type="primary">infB</name>
    <name type="ordered locus">FRAAL5760</name>
</gene>
<proteinExistence type="inferred from homology"/>
<sequence length="1021" mass="103535">MAGKARVHELAKELGVDSKTVLAKLKDLGEFVKSASSTVEAPVVRKLKEAFPAEGGSASGGRPGGRPGPGNGARPAPPRPGLAPRPGPRPVPGRPGPAARPGGPAAPSAPAAPSAPAPGAPAASPPASQPRPIAASAAAPPPAATSIPPVSSPAAASGPRPGPRPAGGPAAPGRARPGAPVPPPGGSAPSAPSAGGPRPGPRPGPRPSAPGNNPYTTPSAGPRQSAGQSGSGPASPPRPGAPRPGPRPGGPRPGAPGAGGPRPSPGSMPPRPGSRPGGSGGMPPRPGGSGGPRPNANMFQPRPAGGAPGRPGGGGAPGRPGGGGGGGGARPGGFAGRGGAPGRPGGGGGGGGGAGAPGRPGGGGGGRPAAGGRGRGGTTAGAFGPGGRGRPGRQRKSKRAKRQEWESGLEAPRMGAMVPRGNGQAIRLPRGASLADFADKIDANPGALVQVVFTQLGEMVTATQSCTDETLQLLGVTLGYEVQIVSPEDEDKELLESFDLSFGGEYGDDVELSIRPPVVTVMGHVDHGKTKLLDAIRFTDVVAGEAGGITQHIGAYQVRATVDGDERPITFIDTPGHETFTAMRARGAQVTDIVVLVVAADDGVKPQTIEALNHAQAAGVPVVVAVNKVDKEGADPAKVRGQLTEYGLVAEEYGGDTMFVDVSARNKTNIDGLLEAIILTADASLDLRAPTGTEAQGVAIEGRLDRGRGPVATVLVQRGTLRVGDSVVAGEAFGRVRAMLDEHGGQVTEAGPARPVQVLGFTSVPDAGDNFLVVPEDRVARQIAERRQARERNAELALSRGRPTLETILERMKEGEKTQLNLILKGDVSGSVEALEDALLKIDVGDEVGLRIIDRGVGAITETNVMLASASDAVIIGFNVRPQGKATELADREGVEVRYYSVIYQAIEDIENALKGMLKPVYEEAQLGTAEVREVFRVPRIGNVAGSLVRSGIIRRNTKARLIRDGVVVADNLTVESLKRFKDDATEVREGYECGIGLGSFNDIKIDDVIETFEQREVPRV</sequence>
<organism>
    <name type="scientific">Frankia alni (strain DSM 45986 / CECT 9034 / ACN14a)</name>
    <dbReference type="NCBI Taxonomy" id="326424"/>
    <lineage>
        <taxon>Bacteria</taxon>
        <taxon>Bacillati</taxon>
        <taxon>Actinomycetota</taxon>
        <taxon>Actinomycetes</taxon>
        <taxon>Frankiales</taxon>
        <taxon>Frankiaceae</taxon>
        <taxon>Frankia</taxon>
    </lineage>
</organism>
<comment type="function">
    <text evidence="2">One of the essential components for the initiation of protein synthesis. Protects formylmethionyl-tRNA from spontaneous hydrolysis and promotes its binding to the 30S ribosomal subunits. Also involved in the hydrolysis of GTP during the formation of the 70S ribosomal complex.</text>
</comment>
<comment type="subcellular location">
    <subcellularLocation>
        <location evidence="2">Cytoplasm</location>
    </subcellularLocation>
</comment>
<comment type="similarity">
    <text evidence="2">Belongs to the TRAFAC class translation factor GTPase superfamily. Classic translation factor GTPase family. IF-2 subfamily.</text>
</comment>
<evidence type="ECO:0000250" key="1"/>
<evidence type="ECO:0000255" key="2">
    <source>
        <dbReference type="HAMAP-Rule" id="MF_00100"/>
    </source>
</evidence>
<evidence type="ECO:0000256" key="3">
    <source>
        <dbReference type="SAM" id="MobiDB-lite"/>
    </source>
</evidence>
<protein>
    <recommendedName>
        <fullName evidence="2">Translation initiation factor IF-2</fullName>
    </recommendedName>
</protein>
<accession>Q0RDS4</accession>
<feature type="chain" id="PRO_0000335471" description="Translation initiation factor IF-2">
    <location>
        <begin position="1"/>
        <end position="1021"/>
    </location>
</feature>
<feature type="domain" description="tr-type G">
    <location>
        <begin position="514"/>
        <end position="686"/>
    </location>
</feature>
<feature type="region of interest" description="Disordered" evidence="3">
    <location>
        <begin position="50"/>
        <end position="422"/>
    </location>
</feature>
<feature type="region of interest" description="G1" evidence="1">
    <location>
        <begin position="523"/>
        <end position="530"/>
    </location>
</feature>
<feature type="region of interest" description="G2" evidence="1">
    <location>
        <begin position="548"/>
        <end position="552"/>
    </location>
</feature>
<feature type="region of interest" description="G3" evidence="1">
    <location>
        <begin position="573"/>
        <end position="576"/>
    </location>
</feature>
<feature type="region of interest" description="G4" evidence="1">
    <location>
        <begin position="627"/>
        <end position="630"/>
    </location>
</feature>
<feature type="region of interest" description="G5" evidence="1">
    <location>
        <begin position="663"/>
        <end position="665"/>
    </location>
</feature>
<feature type="compositionally biased region" description="Gly residues" evidence="3">
    <location>
        <begin position="57"/>
        <end position="71"/>
    </location>
</feature>
<feature type="compositionally biased region" description="Pro residues" evidence="3">
    <location>
        <begin position="75"/>
        <end position="95"/>
    </location>
</feature>
<feature type="compositionally biased region" description="Low complexity" evidence="3">
    <location>
        <begin position="96"/>
        <end position="112"/>
    </location>
</feature>
<feature type="compositionally biased region" description="Pro residues" evidence="3">
    <location>
        <begin position="113"/>
        <end position="129"/>
    </location>
</feature>
<feature type="compositionally biased region" description="Low complexity" evidence="3">
    <location>
        <begin position="130"/>
        <end position="159"/>
    </location>
</feature>
<feature type="compositionally biased region" description="Low complexity" evidence="3">
    <location>
        <begin position="167"/>
        <end position="178"/>
    </location>
</feature>
<feature type="compositionally biased region" description="Low complexity" evidence="3">
    <location>
        <begin position="187"/>
        <end position="196"/>
    </location>
</feature>
<feature type="compositionally biased region" description="Pro residues" evidence="3">
    <location>
        <begin position="198"/>
        <end position="208"/>
    </location>
</feature>
<feature type="compositionally biased region" description="Low complexity" evidence="3">
    <location>
        <begin position="219"/>
        <end position="233"/>
    </location>
</feature>
<feature type="compositionally biased region" description="Pro residues" evidence="3">
    <location>
        <begin position="234"/>
        <end position="254"/>
    </location>
</feature>
<feature type="compositionally biased region" description="Pro residues" evidence="3">
    <location>
        <begin position="262"/>
        <end position="273"/>
    </location>
</feature>
<feature type="compositionally biased region" description="Gly residues" evidence="3">
    <location>
        <begin position="275"/>
        <end position="291"/>
    </location>
</feature>
<feature type="compositionally biased region" description="Gly residues" evidence="3">
    <location>
        <begin position="306"/>
        <end position="389"/>
    </location>
</feature>
<feature type="compositionally biased region" description="Basic residues" evidence="3">
    <location>
        <begin position="390"/>
        <end position="401"/>
    </location>
</feature>
<feature type="binding site" evidence="2">
    <location>
        <begin position="523"/>
        <end position="530"/>
    </location>
    <ligand>
        <name>GTP</name>
        <dbReference type="ChEBI" id="CHEBI:37565"/>
    </ligand>
</feature>
<feature type="binding site" evidence="2">
    <location>
        <begin position="573"/>
        <end position="577"/>
    </location>
    <ligand>
        <name>GTP</name>
        <dbReference type="ChEBI" id="CHEBI:37565"/>
    </ligand>
</feature>
<feature type="binding site" evidence="2">
    <location>
        <begin position="627"/>
        <end position="630"/>
    </location>
    <ligand>
        <name>GTP</name>
        <dbReference type="ChEBI" id="CHEBI:37565"/>
    </ligand>
</feature>